<comment type="function">
    <text evidence="1 2">Required for mitochondrial inner membrane organization. Seems to function through its association with the MICOS complex and the mitochondrial outer membrane sorting assembly machinery (SAM) complex.</text>
</comment>
<comment type="subunit">
    <text evidence="2">Associates with the mitochondrial contact site and cristae organizing system (MICOS) complex, composed of at least MICOS10/MIC10, CHCHD3/MIC19, CHCHD6/MIC25, APOOL/MIC27, IMMT/MIC60, APOO/MIC23/MIC26 and QIL1/MIC13. This complex was also known under the names MINOS or MitOS complex. The MICOS complex associates with mitochondrial outer membrane proteins SAMM50, MTX1 and MTX2 (together described as components of the mitochondrial outer membrane sorting assembly machinery (SAM) complex) and DNAJC11, mitochondrial inner membrane protein TMEM11 and with HSPA9. The MICOS and SAM complexes together with DNAJC11 are part of a large protein complex spanning both membranes termed the mitochondrial intermembrane space bridging (MIB) complex.</text>
</comment>
<comment type="subcellular location">
    <subcellularLocation>
        <location evidence="2">Mitochondrion</location>
    </subcellularLocation>
    <subcellularLocation>
        <location evidence="2">Mitochondrion outer membrane</location>
        <topology evidence="2">Peripheral membrane protein</topology>
    </subcellularLocation>
</comment>
<comment type="similarity">
    <text evidence="5">Belongs to the DNAJC11 family.</text>
</comment>
<dbReference type="EMBL" id="BC111191">
    <property type="protein sequence ID" value="AAI11192.1"/>
    <property type="molecule type" value="mRNA"/>
</dbReference>
<dbReference type="RefSeq" id="NP_001039458.1">
    <property type="nucleotide sequence ID" value="NM_001045993.1"/>
</dbReference>
<dbReference type="SMR" id="Q2NL21"/>
<dbReference type="FunCoup" id="Q2NL21">
    <property type="interactions" value="4052"/>
</dbReference>
<dbReference type="STRING" id="9913.ENSBTAP00000014899"/>
<dbReference type="PaxDb" id="9913-ENSBTAP00000014899"/>
<dbReference type="Ensembl" id="ENSBTAT00000014899.5">
    <property type="protein sequence ID" value="ENSBTAP00000014899.4"/>
    <property type="gene ID" value="ENSBTAG00000011217.6"/>
</dbReference>
<dbReference type="GeneID" id="508137"/>
<dbReference type="KEGG" id="bta:508137"/>
<dbReference type="CTD" id="55735"/>
<dbReference type="VEuPathDB" id="HostDB:ENSBTAG00000011217"/>
<dbReference type="eggNOG" id="KOG0718">
    <property type="taxonomic scope" value="Eukaryota"/>
</dbReference>
<dbReference type="GeneTree" id="ENSGT00860000133842"/>
<dbReference type="HOGENOM" id="CLU_019611_2_0_1"/>
<dbReference type="InParanoid" id="Q2NL21"/>
<dbReference type="OMA" id="QLDKHTM"/>
<dbReference type="OrthoDB" id="18010at2759"/>
<dbReference type="TreeFam" id="TF105170"/>
<dbReference type="Proteomes" id="UP000009136">
    <property type="component" value="Chromosome 16"/>
</dbReference>
<dbReference type="Bgee" id="ENSBTAG00000011217">
    <property type="expression patterns" value="Expressed in choroid plexus and 107 other cell types or tissues"/>
</dbReference>
<dbReference type="GO" id="GO:0061617">
    <property type="term" value="C:MICOS complex"/>
    <property type="evidence" value="ECO:0007669"/>
    <property type="project" value="Ensembl"/>
</dbReference>
<dbReference type="GO" id="GO:0016607">
    <property type="term" value="C:nuclear speck"/>
    <property type="evidence" value="ECO:0007669"/>
    <property type="project" value="Ensembl"/>
</dbReference>
<dbReference type="GO" id="GO:0001401">
    <property type="term" value="C:SAM complex"/>
    <property type="evidence" value="ECO:0007669"/>
    <property type="project" value="Ensembl"/>
</dbReference>
<dbReference type="GO" id="GO:0042407">
    <property type="term" value="P:cristae formation"/>
    <property type="evidence" value="ECO:0000318"/>
    <property type="project" value="GO_Central"/>
</dbReference>
<dbReference type="CDD" id="cd06257">
    <property type="entry name" value="DnaJ"/>
    <property type="match status" value="1"/>
</dbReference>
<dbReference type="FunFam" id="1.10.287.110:FF:000027">
    <property type="entry name" value="DnaJ (Hsp40) homolog, subfamily C, member 11"/>
    <property type="match status" value="1"/>
</dbReference>
<dbReference type="Gene3D" id="1.10.287.110">
    <property type="entry name" value="DnaJ domain"/>
    <property type="match status" value="1"/>
</dbReference>
<dbReference type="InterPro" id="IPR024586">
    <property type="entry name" value="DnaJ-like_C11_C"/>
</dbReference>
<dbReference type="InterPro" id="IPR001623">
    <property type="entry name" value="DnaJ_domain"/>
</dbReference>
<dbReference type="InterPro" id="IPR018253">
    <property type="entry name" value="DnaJ_domain_CS"/>
</dbReference>
<dbReference type="InterPro" id="IPR055225">
    <property type="entry name" value="DNAJC11-like_beta-barrel"/>
</dbReference>
<dbReference type="InterPro" id="IPR036869">
    <property type="entry name" value="J_dom_sf"/>
</dbReference>
<dbReference type="InterPro" id="IPR052243">
    <property type="entry name" value="Mito_inner_membrane_organizer"/>
</dbReference>
<dbReference type="PANTHER" id="PTHR44157">
    <property type="entry name" value="DNAJ HOMOLOG SUBFAMILY C MEMBER 11"/>
    <property type="match status" value="1"/>
</dbReference>
<dbReference type="PANTHER" id="PTHR44157:SF1">
    <property type="entry name" value="DNAJ HOMOLOG SUBFAMILY C MEMBER 11"/>
    <property type="match status" value="1"/>
</dbReference>
<dbReference type="Pfam" id="PF00226">
    <property type="entry name" value="DnaJ"/>
    <property type="match status" value="1"/>
</dbReference>
<dbReference type="Pfam" id="PF11875">
    <property type="entry name" value="DnaJ-like_C11_C"/>
    <property type="match status" value="1"/>
</dbReference>
<dbReference type="Pfam" id="PF22774">
    <property type="entry name" value="DNAJC11_beta-barrel"/>
    <property type="match status" value="1"/>
</dbReference>
<dbReference type="PRINTS" id="PR00625">
    <property type="entry name" value="JDOMAIN"/>
</dbReference>
<dbReference type="SMART" id="SM00271">
    <property type="entry name" value="DnaJ"/>
    <property type="match status" value="1"/>
</dbReference>
<dbReference type="SUPFAM" id="SSF46565">
    <property type="entry name" value="Chaperone J-domain"/>
    <property type="match status" value="1"/>
</dbReference>
<dbReference type="PROSITE" id="PS00636">
    <property type="entry name" value="DNAJ_1"/>
    <property type="match status" value="1"/>
</dbReference>
<dbReference type="PROSITE" id="PS50076">
    <property type="entry name" value="DNAJ_2"/>
    <property type="match status" value="1"/>
</dbReference>
<gene>
    <name type="primary">DNAJC11</name>
</gene>
<sequence>MATALSEEELDNEDYYSLLNVRREASCEELKAAYRRLCMLYHPDKHRDPELKSQAERLFNLVHQAYEVLSDPQTRAIYDIYGKRGLEMEGWEVVERRRTPAEIREEFERLQREREERRLQQRTNPKGTISVGIDATDLFDRYEEEYEDVSGSGFPQIEINKMHISQSIEAPLTASDTAILSGSLSTQNGNGGGSINFALRRVTSAKGWGELEFGAGDLQGPLFGLKLFRNLTPRCFVTTHCALQFSSRGIRPGLTTVLARNLDKNTVGYLQWRWGVQSAMNTSIVRDTKTSHFTVALQLGIPHSFALISYQHKFQDDDQTRVKGSLKAGFFGTVVEYGAERKISRHSVLGAAVSIGVPQGVSLKIKLNRASQTYFFPIHLTDQLLPSAVFYATAGPLVLYFALHRLVIRPYLRAQKEKELEKQRESTATDILQKKQEAEAAVRLMQESVRRIIEAEESRMGLIIVNAWYGKFVNDKSKKSEKVKVIDVTVPLQCLVKDSKLILTEASKAGLPGFYDPCVGEEKNLKVLYQFRGVLHQVMALDSEALRIPKQSHRIDTDG</sequence>
<proteinExistence type="evidence at transcript level"/>
<reference key="1">
    <citation type="submission" date="2005-12" db="EMBL/GenBank/DDBJ databases">
        <authorList>
            <consortium name="NIH - Mammalian Gene Collection (MGC) project"/>
        </authorList>
    </citation>
    <scope>NUCLEOTIDE SEQUENCE [LARGE SCALE MRNA]</scope>
    <source>
        <strain>Crossbred X Angus</strain>
        <tissue>Liver</tissue>
    </source>
</reference>
<feature type="initiator methionine" description="Removed" evidence="2">
    <location>
        <position position="1"/>
    </location>
</feature>
<feature type="chain" id="PRO_0000247156" description="DnaJ homolog subfamily C member 11">
    <location>
        <begin position="2"/>
        <end position="559"/>
    </location>
</feature>
<feature type="domain" description="J" evidence="4">
    <location>
        <begin position="14"/>
        <end position="82"/>
    </location>
</feature>
<feature type="coiled-coil region" evidence="3">
    <location>
        <begin position="418"/>
        <end position="457"/>
    </location>
</feature>
<feature type="modified residue" description="N-acetylalanine" evidence="2">
    <location>
        <position position="2"/>
    </location>
</feature>
<feature type="modified residue" description="Phosphoserine" evidence="1">
    <location>
        <position position="204"/>
    </location>
</feature>
<organism>
    <name type="scientific">Bos taurus</name>
    <name type="common">Bovine</name>
    <dbReference type="NCBI Taxonomy" id="9913"/>
    <lineage>
        <taxon>Eukaryota</taxon>
        <taxon>Metazoa</taxon>
        <taxon>Chordata</taxon>
        <taxon>Craniata</taxon>
        <taxon>Vertebrata</taxon>
        <taxon>Euteleostomi</taxon>
        <taxon>Mammalia</taxon>
        <taxon>Eutheria</taxon>
        <taxon>Laurasiatheria</taxon>
        <taxon>Artiodactyla</taxon>
        <taxon>Ruminantia</taxon>
        <taxon>Pecora</taxon>
        <taxon>Bovidae</taxon>
        <taxon>Bovinae</taxon>
        <taxon>Bos</taxon>
    </lineage>
</organism>
<evidence type="ECO:0000250" key="1">
    <source>
        <dbReference type="UniProtKB" id="Q5U458"/>
    </source>
</evidence>
<evidence type="ECO:0000250" key="2">
    <source>
        <dbReference type="UniProtKB" id="Q9NVH1"/>
    </source>
</evidence>
<evidence type="ECO:0000255" key="3"/>
<evidence type="ECO:0000255" key="4">
    <source>
        <dbReference type="PROSITE-ProRule" id="PRU00286"/>
    </source>
</evidence>
<evidence type="ECO:0000305" key="5"/>
<accession>Q2NL21</accession>
<protein>
    <recommendedName>
        <fullName>DnaJ homolog subfamily C member 11</fullName>
    </recommendedName>
</protein>
<name>DJC11_BOVIN</name>
<keyword id="KW-0007">Acetylation</keyword>
<keyword id="KW-0143">Chaperone</keyword>
<keyword id="KW-0175">Coiled coil</keyword>
<keyword id="KW-0472">Membrane</keyword>
<keyword id="KW-0496">Mitochondrion</keyword>
<keyword id="KW-1000">Mitochondrion outer membrane</keyword>
<keyword id="KW-0597">Phosphoprotein</keyword>
<keyword id="KW-1185">Reference proteome</keyword>